<accession>Q81K07</accession>
<accession>Q6HQK6</accession>
<accession>Q6KJY1</accession>
<name>NUOK_BACAN</name>
<reference key="1">
    <citation type="journal article" date="2003" name="Nature">
        <title>The genome sequence of Bacillus anthracis Ames and comparison to closely related bacteria.</title>
        <authorList>
            <person name="Read T.D."/>
            <person name="Peterson S.N."/>
            <person name="Tourasse N.J."/>
            <person name="Baillie L.W."/>
            <person name="Paulsen I.T."/>
            <person name="Nelson K.E."/>
            <person name="Tettelin H."/>
            <person name="Fouts D.E."/>
            <person name="Eisen J.A."/>
            <person name="Gill S.R."/>
            <person name="Holtzapple E.K."/>
            <person name="Okstad O.A."/>
            <person name="Helgason E."/>
            <person name="Rilstone J."/>
            <person name="Wu M."/>
            <person name="Kolonay J.F."/>
            <person name="Beanan M.J."/>
            <person name="Dodson R.J."/>
            <person name="Brinkac L.M."/>
            <person name="Gwinn M.L."/>
            <person name="DeBoy R.T."/>
            <person name="Madpu R."/>
            <person name="Daugherty S.C."/>
            <person name="Durkin A.S."/>
            <person name="Haft D.H."/>
            <person name="Nelson W.C."/>
            <person name="Peterson J.D."/>
            <person name="Pop M."/>
            <person name="Khouri H.M."/>
            <person name="Radune D."/>
            <person name="Benton J.L."/>
            <person name="Mahamoud Y."/>
            <person name="Jiang L."/>
            <person name="Hance I.R."/>
            <person name="Weidman J.F."/>
            <person name="Berry K.J."/>
            <person name="Plaut R.D."/>
            <person name="Wolf A.M."/>
            <person name="Watkins K.L."/>
            <person name="Nierman W.C."/>
            <person name="Hazen A."/>
            <person name="Cline R.T."/>
            <person name="Redmond C."/>
            <person name="Thwaite J.E."/>
            <person name="White O."/>
            <person name="Salzberg S.L."/>
            <person name="Thomason B."/>
            <person name="Friedlander A.M."/>
            <person name="Koehler T.M."/>
            <person name="Hanna P.C."/>
            <person name="Kolstoe A.-B."/>
            <person name="Fraser C.M."/>
        </authorList>
    </citation>
    <scope>NUCLEOTIDE SEQUENCE [LARGE SCALE GENOMIC DNA]</scope>
    <source>
        <strain>Ames / isolate Porton</strain>
    </source>
</reference>
<reference key="2">
    <citation type="submission" date="2004-01" db="EMBL/GenBank/DDBJ databases">
        <title>Complete genome sequence of Bacillus anthracis Sterne.</title>
        <authorList>
            <person name="Brettin T.S."/>
            <person name="Bruce D."/>
            <person name="Challacombe J.F."/>
            <person name="Gilna P."/>
            <person name="Han C."/>
            <person name="Hill K."/>
            <person name="Hitchcock P."/>
            <person name="Jackson P."/>
            <person name="Keim P."/>
            <person name="Longmire J."/>
            <person name="Lucas S."/>
            <person name="Okinaka R."/>
            <person name="Richardson P."/>
            <person name="Rubin E."/>
            <person name="Tice H."/>
        </authorList>
    </citation>
    <scope>NUCLEOTIDE SEQUENCE [LARGE SCALE GENOMIC DNA]</scope>
    <source>
        <strain>Sterne</strain>
    </source>
</reference>
<reference key="3">
    <citation type="journal article" date="2009" name="J. Bacteriol.">
        <title>The complete genome sequence of Bacillus anthracis Ames 'Ancestor'.</title>
        <authorList>
            <person name="Ravel J."/>
            <person name="Jiang L."/>
            <person name="Stanley S.T."/>
            <person name="Wilson M.R."/>
            <person name="Decker R.S."/>
            <person name="Read T.D."/>
            <person name="Worsham P."/>
            <person name="Keim P.S."/>
            <person name="Salzberg S.L."/>
            <person name="Fraser-Liggett C.M."/>
            <person name="Rasko D.A."/>
        </authorList>
    </citation>
    <scope>NUCLEOTIDE SEQUENCE [LARGE SCALE GENOMIC DNA]</scope>
    <source>
        <strain>Ames ancestor</strain>
    </source>
</reference>
<dbReference type="EC" id="7.1.1.-" evidence="1"/>
<dbReference type="EMBL" id="AE016879">
    <property type="protein sequence ID" value="AAP29179.1"/>
    <property type="molecule type" value="Genomic_DNA"/>
</dbReference>
<dbReference type="EMBL" id="AE017334">
    <property type="protein sequence ID" value="AAT34678.1"/>
    <property type="molecule type" value="Genomic_DNA"/>
</dbReference>
<dbReference type="EMBL" id="AE017225">
    <property type="protein sequence ID" value="AAT57432.1"/>
    <property type="molecule type" value="Genomic_DNA"/>
</dbReference>
<dbReference type="RefSeq" id="NP_847693.1">
    <property type="nucleotide sequence ID" value="NC_003997.3"/>
</dbReference>
<dbReference type="RefSeq" id="WP_000100076.1">
    <property type="nucleotide sequence ID" value="NZ_WXXJ01000038.1"/>
</dbReference>
<dbReference type="RefSeq" id="YP_031382.1">
    <property type="nucleotide sequence ID" value="NC_005945.1"/>
</dbReference>
<dbReference type="SMR" id="Q81K07"/>
<dbReference type="STRING" id="261594.GBAA_5535"/>
<dbReference type="DNASU" id="1085207"/>
<dbReference type="GeneID" id="45025123"/>
<dbReference type="KEGG" id="ban:BA_5535"/>
<dbReference type="KEGG" id="bar:GBAA_5535"/>
<dbReference type="KEGG" id="bat:BAS5143"/>
<dbReference type="PATRIC" id="fig|198094.11.peg.5495"/>
<dbReference type="eggNOG" id="COG0713">
    <property type="taxonomic scope" value="Bacteria"/>
</dbReference>
<dbReference type="HOGENOM" id="CLU_144724_0_0_9"/>
<dbReference type="OMA" id="IPMEHGL"/>
<dbReference type="OrthoDB" id="9810120at2"/>
<dbReference type="Proteomes" id="UP000000427">
    <property type="component" value="Chromosome"/>
</dbReference>
<dbReference type="Proteomes" id="UP000000594">
    <property type="component" value="Chromosome"/>
</dbReference>
<dbReference type="GO" id="GO:0030964">
    <property type="term" value="C:NADH dehydrogenase complex"/>
    <property type="evidence" value="ECO:0007669"/>
    <property type="project" value="TreeGrafter"/>
</dbReference>
<dbReference type="GO" id="GO:0005886">
    <property type="term" value="C:plasma membrane"/>
    <property type="evidence" value="ECO:0007669"/>
    <property type="project" value="UniProtKB-SubCell"/>
</dbReference>
<dbReference type="GO" id="GO:0050136">
    <property type="term" value="F:NADH:ubiquinone reductase (non-electrogenic) activity"/>
    <property type="evidence" value="ECO:0007669"/>
    <property type="project" value="UniProtKB-UniRule"/>
</dbReference>
<dbReference type="GO" id="GO:0048038">
    <property type="term" value="F:quinone binding"/>
    <property type="evidence" value="ECO:0007669"/>
    <property type="project" value="UniProtKB-KW"/>
</dbReference>
<dbReference type="GO" id="GO:0042773">
    <property type="term" value="P:ATP synthesis coupled electron transport"/>
    <property type="evidence" value="ECO:0007669"/>
    <property type="project" value="InterPro"/>
</dbReference>
<dbReference type="FunFam" id="1.10.287.3510:FF:000001">
    <property type="entry name" value="NADH-quinone oxidoreductase subunit K"/>
    <property type="match status" value="1"/>
</dbReference>
<dbReference type="Gene3D" id="1.10.287.3510">
    <property type="match status" value="1"/>
</dbReference>
<dbReference type="HAMAP" id="MF_01456">
    <property type="entry name" value="NDH1_NuoK"/>
    <property type="match status" value="1"/>
</dbReference>
<dbReference type="InterPro" id="IPR001133">
    <property type="entry name" value="NADH_UbQ_OxRdtase_chain4L/K"/>
</dbReference>
<dbReference type="InterPro" id="IPR039428">
    <property type="entry name" value="NUOK/Mnh_C1-like"/>
</dbReference>
<dbReference type="NCBIfam" id="NF004320">
    <property type="entry name" value="PRK05715.1-2"/>
    <property type="match status" value="1"/>
</dbReference>
<dbReference type="NCBIfam" id="NF004321">
    <property type="entry name" value="PRK05715.1-3"/>
    <property type="match status" value="1"/>
</dbReference>
<dbReference type="NCBIfam" id="NF004322">
    <property type="entry name" value="PRK05715.1-4"/>
    <property type="match status" value="1"/>
</dbReference>
<dbReference type="NCBIfam" id="NF004323">
    <property type="entry name" value="PRK05715.1-5"/>
    <property type="match status" value="1"/>
</dbReference>
<dbReference type="PANTHER" id="PTHR11434:SF16">
    <property type="entry name" value="NADH-UBIQUINONE OXIDOREDUCTASE CHAIN 4L"/>
    <property type="match status" value="1"/>
</dbReference>
<dbReference type="PANTHER" id="PTHR11434">
    <property type="entry name" value="NADH-UBIQUINONE OXIDOREDUCTASE SUBUNIT ND4L"/>
    <property type="match status" value="1"/>
</dbReference>
<dbReference type="Pfam" id="PF00420">
    <property type="entry name" value="Oxidored_q2"/>
    <property type="match status" value="1"/>
</dbReference>
<keyword id="KW-1003">Cell membrane</keyword>
<keyword id="KW-0472">Membrane</keyword>
<keyword id="KW-0520">NAD</keyword>
<keyword id="KW-0874">Quinone</keyword>
<keyword id="KW-1185">Reference proteome</keyword>
<keyword id="KW-1278">Translocase</keyword>
<keyword id="KW-0812">Transmembrane</keyword>
<keyword id="KW-1133">Transmembrane helix</keyword>
<keyword id="KW-0813">Transport</keyword>
<sequence>MSSVPASAYLTLAIILFCIGLFGALTKRNTVIVLVCIELMLNAANLNFVAFSKLGLFPNLTGQIFSLFTMAVAAAEAAVGLAILIALYRNRTTVHVDEMDTLKG</sequence>
<organism>
    <name type="scientific">Bacillus anthracis</name>
    <dbReference type="NCBI Taxonomy" id="1392"/>
    <lineage>
        <taxon>Bacteria</taxon>
        <taxon>Bacillati</taxon>
        <taxon>Bacillota</taxon>
        <taxon>Bacilli</taxon>
        <taxon>Bacillales</taxon>
        <taxon>Bacillaceae</taxon>
        <taxon>Bacillus</taxon>
        <taxon>Bacillus cereus group</taxon>
    </lineage>
</organism>
<protein>
    <recommendedName>
        <fullName evidence="1">NADH-quinone oxidoreductase subunit K</fullName>
        <ecNumber evidence="1">7.1.1.-</ecNumber>
    </recommendedName>
    <alternativeName>
        <fullName evidence="1">NADH dehydrogenase I subunit K</fullName>
    </alternativeName>
    <alternativeName>
        <fullName evidence="1">NDH-1 subunit K</fullName>
    </alternativeName>
</protein>
<comment type="function">
    <text evidence="1">NDH-1 shuttles electrons from NADH, via FMN and iron-sulfur (Fe-S) centers, to quinones in the respiratory chain. The immediate electron acceptor for the enzyme in this species is believed to be a menaquinone. Couples the redox reaction to proton translocation (for every two electrons transferred, four hydrogen ions are translocated across the cytoplasmic membrane), and thus conserves the redox energy in a proton gradient.</text>
</comment>
<comment type="catalytic activity">
    <reaction evidence="1">
        <text>a quinone + NADH + 5 H(+)(in) = a quinol + NAD(+) + 4 H(+)(out)</text>
        <dbReference type="Rhea" id="RHEA:57888"/>
        <dbReference type="ChEBI" id="CHEBI:15378"/>
        <dbReference type="ChEBI" id="CHEBI:24646"/>
        <dbReference type="ChEBI" id="CHEBI:57540"/>
        <dbReference type="ChEBI" id="CHEBI:57945"/>
        <dbReference type="ChEBI" id="CHEBI:132124"/>
    </reaction>
</comment>
<comment type="subunit">
    <text evidence="1">NDH-1 is composed of 14 different subunits. Subunits NuoA, H, J, K, L, M, N constitute the membrane sector of the complex.</text>
</comment>
<comment type="subcellular location">
    <subcellularLocation>
        <location evidence="1">Cell membrane</location>
        <topology evidence="1">Multi-pass membrane protein</topology>
    </subcellularLocation>
</comment>
<comment type="similarity">
    <text evidence="1">Belongs to the complex I subunit 4L family.</text>
</comment>
<feature type="chain" id="PRO_0000389937" description="NADH-quinone oxidoreductase subunit K">
    <location>
        <begin position="1"/>
        <end position="104"/>
    </location>
</feature>
<feature type="transmembrane region" description="Helical" evidence="1">
    <location>
        <begin position="4"/>
        <end position="24"/>
    </location>
</feature>
<feature type="transmembrane region" description="Helical" evidence="1">
    <location>
        <begin position="31"/>
        <end position="51"/>
    </location>
</feature>
<feature type="transmembrane region" description="Helical" evidence="1">
    <location>
        <begin position="67"/>
        <end position="87"/>
    </location>
</feature>
<gene>
    <name evidence="1" type="primary">nuoK</name>
    <name type="ordered locus">BA_5535</name>
    <name type="ordered locus">GBAA_5535</name>
    <name type="ordered locus">BAS5143</name>
</gene>
<proteinExistence type="inferred from homology"/>
<evidence type="ECO:0000255" key="1">
    <source>
        <dbReference type="HAMAP-Rule" id="MF_01456"/>
    </source>
</evidence>